<accession>Q04672</accession>
<sequence>MGMRTKLSLAIFFFFLLALFSNLAFGKCKETEVEEEDPELVTCKHQCQQQQQYTEGDKRVCLQSCDRYHRMKQEREKQIQEETREKKEEESREREEEQQEQHEEQDENPYIFEEDKDFETRVETEGGRIRVLKKFTEKSKLLQGIENFRLAILEARAHTFVSPRHFDSEVVFFNIKGRAVLGLVSESETEKITLEPGDMIHIPAGTPLYIVNRDENDKLFLAMLHIPVSVSTPGKFEEFFAPGGRDPESVLSAFSWNVLQAALQTPKGKLENVFDQQNEGSIFRISREQVRALAPTKKSSWWPFGGESKPQFNIFSKRPTISNGYGRLTEVGPDDDEKSWLQRLNLMLTFTNITQRSMSTIHYNSHATKIALVIDGRGHLQISCPHMSSRSSHSKHDKSSPSYHRISSDLKPGMVFVVPPGHPFVTIASNKENLLMICFEVNARDNKKFTFAGKDNIVSSLDNVAKELAFNYPSEMVNGVFLLQRFLERKLIGRLYHLPHKDRKESFFFPFELPREERGRRADA</sequence>
<evidence type="ECO:0000255" key="1"/>
<evidence type="ECO:0000256" key="2">
    <source>
        <dbReference type="SAM" id="MobiDB-lite"/>
    </source>
</evidence>
<evidence type="ECO:0000269" key="3">
    <source>
    </source>
</evidence>
<name>SBP_SOYBN</name>
<protein>
    <recommendedName>
        <fullName>Sucrose-binding protein</fullName>
        <shortName>SBP</shortName>
    </recommendedName>
</protein>
<keyword id="KW-0903">Direct protein sequencing</keyword>
<keyword id="KW-0472">Membrane</keyword>
<keyword id="KW-1185">Reference proteome</keyword>
<keyword id="KW-0732">Signal</keyword>
<keyword id="KW-0762">Sugar transport</keyword>
<keyword id="KW-0813">Transport</keyword>
<comment type="function">
    <text>Plays a role in sucrose transport.</text>
</comment>
<comment type="subcellular location">
    <subcellularLocation>
        <location>Membrane</location>
        <topology>Peripheral membrane protein</topology>
    </subcellularLocation>
</comment>
<comment type="tissue specificity">
    <text>Associated with the plasma membrane of several cell types engaged in sucrose transport, including the mesophyll cells of young sink leaves, the companion cells of mature phloem and the cells of developing cotyledons.</text>
</comment>
<comment type="developmental stage">
    <text>In the cotyledon, expression is not detected until 10 days after fertilization. Between 10-19 days after fertilization, expression increases rapidly but declines 20-30 days after fertilization. 30 days after fertilization, no expression occurs. This expression pattern closely parallels the rate of sucrose uptake in the cotyledon.</text>
</comment>
<dbReference type="EMBL" id="L06038">
    <property type="protein sequence ID" value="AAB03894.1"/>
    <property type="molecule type" value="mRNA"/>
</dbReference>
<dbReference type="PIR" id="JQ1730">
    <property type="entry name" value="JQ1730"/>
</dbReference>
<dbReference type="RefSeq" id="NP_001276308.1">
    <property type="nucleotide sequence ID" value="NM_001289379.1"/>
</dbReference>
<dbReference type="SMR" id="Q04672"/>
<dbReference type="STRING" id="3847.Q04672"/>
<dbReference type="PaxDb" id="3847-GLYMA10G03390.1"/>
<dbReference type="GeneID" id="100787186"/>
<dbReference type="KEGG" id="gmx:100787186"/>
<dbReference type="eggNOG" id="ENOG502QQEP">
    <property type="taxonomic scope" value="Eukaryota"/>
</dbReference>
<dbReference type="InParanoid" id="Q04672"/>
<dbReference type="OrthoDB" id="1912756at2759"/>
<dbReference type="Proteomes" id="UP000008827">
    <property type="component" value="Unplaced"/>
</dbReference>
<dbReference type="GO" id="GO:0005783">
    <property type="term" value="C:endoplasmic reticulum"/>
    <property type="evidence" value="ECO:0007669"/>
    <property type="project" value="UniProtKB-ARBA"/>
</dbReference>
<dbReference type="GO" id="GO:0016020">
    <property type="term" value="C:membrane"/>
    <property type="evidence" value="ECO:0007669"/>
    <property type="project" value="UniProtKB-SubCell"/>
</dbReference>
<dbReference type="GO" id="GO:0000326">
    <property type="term" value="C:protein storage vacuole"/>
    <property type="evidence" value="ECO:0007669"/>
    <property type="project" value="UniProtKB-ARBA"/>
</dbReference>
<dbReference type="CDD" id="cd02245">
    <property type="entry name" value="cupin_7S_vicilin-like_C"/>
    <property type="match status" value="1"/>
</dbReference>
<dbReference type="CDD" id="cd02244">
    <property type="entry name" value="cupin_7S_vicilin-like_N"/>
    <property type="match status" value="1"/>
</dbReference>
<dbReference type="Gene3D" id="2.60.120.10">
    <property type="entry name" value="Jelly Rolls"/>
    <property type="match status" value="2"/>
</dbReference>
<dbReference type="InterPro" id="IPR006045">
    <property type="entry name" value="Cupin_1"/>
</dbReference>
<dbReference type="InterPro" id="IPR014710">
    <property type="entry name" value="RmlC-like_jellyroll"/>
</dbReference>
<dbReference type="InterPro" id="IPR011051">
    <property type="entry name" value="RmlC_Cupin_sf"/>
</dbReference>
<dbReference type="InterPro" id="IPR050253">
    <property type="entry name" value="Seed_Storage-Functional"/>
</dbReference>
<dbReference type="PANTHER" id="PTHR31189:SF13">
    <property type="entry name" value="CUPINCIN"/>
    <property type="match status" value="1"/>
</dbReference>
<dbReference type="PANTHER" id="PTHR31189">
    <property type="entry name" value="OS03G0336100 PROTEIN-RELATED"/>
    <property type="match status" value="1"/>
</dbReference>
<dbReference type="Pfam" id="PF00190">
    <property type="entry name" value="Cupin_1"/>
    <property type="match status" value="2"/>
</dbReference>
<dbReference type="SMART" id="SM00835">
    <property type="entry name" value="Cupin_1"/>
    <property type="match status" value="2"/>
</dbReference>
<dbReference type="SUPFAM" id="SSF51182">
    <property type="entry name" value="RmlC-like cupins"/>
    <property type="match status" value="1"/>
</dbReference>
<gene>
    <name type="primary">SBP</name>
</gene>
<proteinExistence type="evidence at protein level"/>
<organism>
    <name type="scientific">Glycine max</name>
    <name type="common">Soybean</name>
    <name type="synonym">Glycine hispida</name>
    <dbReference type="NCBI Taxonomy" id="3847"/>
    <lineage>
        <taxon>Eukaryota</taxon>
        <taxon>Viridiplantae</taxon>
        <taxon>Streptophyta</taxon>
        <taxon>Embryophyta</taxon>
        <taxon>Tracheophyta</taxon>
        <taxon>Spermatophyta</taxon>
        <taxon>Magnoliopsida</taxon>
        <taxon>eudicotyledons</taxon>
        <taxon>Gunneridae</taxon>
        <taxon>Pentapetalae</taxon>
        <taxon>rosids</taxon>
        <taxon>fabids</taxon>
        <taxon>Fabales</taxon>
        <taxon>Fabaceae</taxon>
        <taxon>Papilionoideae</taxon>
        <taxon>50 kb inversion clade</taxon>
        <taxon>NPAAA clade</taxon>
        <taxon>indigoferoid/millettioid clade</taxon>
        <taxon>Phaseoleae</taxon>
        <taxon>Glycine</taxon>
        <taxon>Glycine subgen. Soja</taxon>
    </lineage>
</organism>
<reference key="1">
    <citation type="journal article" date="1992" name="Plant Cell">
        <title>A 62-kD sucrose binding protein is expressed and localized in tissues actively engaged in sucrose transport.</title>
        <authorList>
            <person name="Grimes H.D."/>
            <person name="Overvoorde P.J."/>
            <person name="Ripp K."/>
            <person name="Franceschi V.R."/>
            <person name="Hitz W.D."/>
        </authorList>
    </citation>
    <scope>NUCLEOTIDE SEQUENCE [MRNA]</scope>
    <scope>PROTEIN SEQUENCE OF 30-50</scope>
    <source>
        <tissue>Embryo</tissue>
    </source>
</reference>
<feature type="signal peptide" evidence="3">
    <location>
        <begin position="1"/>
        <end position="29"/>
    </location>
</feature>
<feature type="chain" id="PRO_0000022282" description="Sucrose-binding protein">
    <location>
        <begin position="30"/>
        <end position="524"/>
    </location>
</feature>
<feature type="domain" description="Cupin type-1 1" evidence="1">
    <location>
        <begin position="110"/>
        <end position="271"/>
    </location>
</feature>
<feature type="domain" description="Cupin type-1 2" evidence="1">
    <location>
        <begin position="312"/>
        <end position="478"/>
    </location>
</feature>
<feature type="region of interest" description="Disordered" evidence="2">
    <location>
        <begin position="73"/>
        <end position="107"/>
    </location>
</feature>
<feature type="region of interest" description="Disordered" evidence="2">
    <location>
        <begin position="384"/>
        <end position="404"/>
    </location>
</feature>
<feature type="compositionally biased region" description="Basic and acidic residues" evidence="2">
    <location>
        <begin position="73"/>
        <end position="102"/>
    </location>
</feature>